<comment type="function">
    <text evidence="2 8">Modulates the structure and function of the apical ectodermal ridge (AER) that controls embryonic limb development (PubMed:21575622). Functions in cell-cell adhesion, cell migration and axon guidance, exerting an attractive or repulsive role depending on its interaction partners. Plays a role in the spatial organization of brain neurons. Plays a role in vascular development. Plays a role in cell-cell adhesion via its interaction with latrophilins that are expressed at the surface of adjacent cells. Mediates axon attraction towards cells expressing NTN1. Mediates axon growth cone collapse and plays a repulsive role in neuron guidance via its interaction with UNC-5 family members. Plays a role in the regulation of the density of glutamaergic synapses. Plays a role in fibroblast growth factor-mediated signaling cascades. Required for normal morphogenesis during embryonic development, but not for normal embryonic patterning (By similarity).</text>
</comment>
<comment type="subcellular location">
    <subcellularLocation>
        <location evidence="2">Cell membrane</location>
        <topology evidence="2">Single-pass membrane protein</topology>
    </subcellularLocation>
    <subcellularLocation>
        <location evidence="2">Endoplasmic reticulum membrane</location>
    </subcellularLocation>
    <subcellularLocation>
        <location evidence="2">Cell junction</location>
        <location evidence="2">Focal adhesion</location>
    </subcellularLocation>
    <subcellularLocation>
        <location evidence="2">Secreted</location>
    </subcellularLocation>
    <subcellularLocation>
        <location evidence="2">Cell projection</location>
        <location evidence="2">Axon</location>
    </subcellularLocation>
    <subcellularLocation>
        <location evidence="2">Cell projection</location>
        <location evidence="2">Growth cone membrane</location>
    </subcellularLocation>
    <text evidence="1 2">Detected on dendritic punctae that colocalize in part with glutamaergic synapses, but not with GABAergic synapses. Proteolytic cleavage in the juxtamembrane region gives rise to a shedded ectodomain.</text>
</comment>
<comment type="developmental stage">
    <text evidence="8">Detected in distal ectodermal cells at Hamburger Hamilton stage 18 (18HH). Becomes restricted to the apical ectodermal ridge (AER) (at protein level). At stage 11HH, detected in neural ectoderm, developing optic placodes, the neural crest around the otic placodes, and along the anterior-posterior axis in somites. Detected in the ectoderm of the limb bud at 16HH to 18HH. Becomes restricted to the dermomyotome closer to the neural tube at stage 18HH. At 19HH and 23HH, detected in the apical ectodermal ridge, the developing eye and branchial arches.</text>
</comment>
<comment type="PTM">
    <text evidence="2">N-glycosylated.</text>
</comment>
<comment type="PTM">
    <text evidence="2">Proteolytic cleavage in the juxtamembrane region gives rise to a soluble ectodomain. Cleavage is probably effected by a metalloprotease.</text>
</comment>
<evidence type="ECO:0000250" key="1">
    <source>
        <dbReference type="UniProtKB" id="B1H234"/>
    </source>
</evidence>
<evidence type="ECO:0000250" key="2">
    <source>
        <dbReference type="UniProtKB" id="Q8BGT1"/>
    </source>
</evidence>
<evidence type="ECO:0000250" key="3">
    <source>
        <dbReference type="UniProtKB" id="Q9NZU0"/>
    </source>
</evidence>
<evidence type="ECO:0000255" key="4"/>
<evidence type="ECO:0000255" key="5">
    <source>
        <dbReference type="PROSITE-ProRule" id="PRU00316"/>
    </source>
</evidence>
<evidence type="ECO:0000255" key="6">
    <source>
        <dbReference type="PROSITE-ProRule" id="PRU00498"/>
    </source>
</evidence>
<evidence type="ECO:0000256" key="7">
    <source>
        <dbReference type="SAM" id="MobiDB-lite"/>
    </source>
</evidence>
<evidence type="ECO:0000269" key="8">
    <source>
    </source>
</evidence>
<evidence type="ECO:0000305" key="9"/>
<name>FLRT3_CHICK</name>
<keyword id="KW-0130">Cell adhesion</keyword>
<keyword id="KW-0965">Cell junction</keyword>
<keyword id="KW-1003">Cell membrane</keyword>
<keyword id="KW-0966">Cell projection</keyword>
<keyword id="KW-0217">Developmental protein</keyword>
<keyword id="KW-1015">Disulfide bond</keyword>
<keyword id="KW-0256">Endoplasmic reticulum</keyword>
<keyword id="KW-0325">Glycoprotein</keyword>
<keyword id="KW-0433">Leucine-rich repeat</keyword>
<keyword id="KW-0472">Membrane</keyword>
<keyword id="KW-1185">Reference proteome</keyword>
<keyword id="KW-0677">Repeat</keyword>
<keyword id="KW-0964">Secreted</keyword>
<keyword id="KW-0732">Signal</keyword>
<keyword id="KW-0812">Transmembrane</keyword>
<keyword id="KW-1133">Transmembrane helix</keyword>
<gene>
    <name type="primary">FLRT3</name>
</gene>
<sequence>MITVPWSVFLIWTKIGLLLDMAPYSVAAKPCPSVCRCDVGFIYCNDRDLTSIPTGIPEDATNLFLQNNQINNAGIPSELKNLRRVERIFLYHNSLDEFPTNLPKYVKELHLQENNIRTITYDSLSQIPYLEELHLDDNSVSAVSIEDGAFRDNIYLRLLFLSRNHLSTIPWGLPKTIEELRLDDNRISTISELSLQDLTNLKRLVLDGNLLNNHGLGDKVFMNLVNLTELSLVRNSLTAAPVNLPGTNLRKLYLQENHINHVPPNAFSYLRQLYRLDMSNNNLSNLPQGVFDDLDNITQLFLRNNPWHCGCKMKWVRDWLQSLPLKVNVRGLMCQAPEKVRGMAIKDLNAELFDCKDDMSTIQITTAVPNTLYPAQGHWPVSVTKQPDIKTPNLNKNYRTTASPVRKIITIFVKSVSTETIHISWKVALPMTALRLSWLKMGHSPAFGSITETIVTGDRSDYLLTALEPESPYRVCMVPMETSNIYLSDETPECIETETAPLKMYNPTTTLNREQEKEPYKNSSVPLAAIIGGAVALVALALLALVCWYVHRNGALFSRHCAYSKGRRRKDDYAEAGTKKDNSILEIRETSFQMIPITNDQVSKEEFVIHTIFPPNGMNLYKNSHSESSSNRSYRDSGIPDSDHSHS</sequence>
<dbReference type="EMBL" id="AADN03003311">
    <property type="status" value="NOT_ANNOTATED_CDS"/>
    <property type="molecule type" value="Genomic_DNA"/>
</dbReference>
<dbReference type="RefSeq" id="NP_001383374.1">
    <property type="nucleotide sequence ID" value="NM_001396445.1"/>
</dbReference>
<dbReference type="RefSeq" id="XP_015138909.1">
    <property type="nucleotide sequence ID" value="XM_015283423.4"/>
</dbReference>
<dbReference type="RefSeq" id="XP_040523030.1">
    <property type="nucleotide sequence ID" value="XM_040667096.2"/>
</dbReference>
<dbReference type="SMR" id="F1NUK7"/>
<dbReference type="FunCoup" id="F1NUK7">
    <property type="interactions" value="330"/>
</dbReference>
<dbReference type="STRING" id="9031.ENSGALP00000014168"/>
<dbReference type="GlyCosmos" id="F1NUK7">
    <property type="glycosylation" value="1 site, No reported glycans"/>
</dbReference>
<dbReference type="GlyGen" id="F1NUK7">
    <property type="glycosylation" value="1 site"/>
</dbReference>
<dbReference type="PaxDb" id="9031-ENSGALP00000014168"/>
<dbReference type="Ensembl" id="ENSGALT00010045301.1">
    <property type="protein sequence ID" value="ENSGALP00010027040.1"/>
    <property type="gene ID" value="ENSGALG00010018747.1"/>
</dbReference>
<dbReference type="Ensembl" id="ENSGALT00010045305.1">
    <property type="protein sequence ID" value="ENSGALP00010027042.1"/>
    <property type="gene ID" value="ENSGALG00010018747.1"/>
</dbReference>
<dbReference type="Ensembl" id="ENSGALT00010045308.1">
    <property type="protein sequence ID" value="ENSGALP00010027045.1"/>
    <property type="gene ID" value="ENSGALG00010018747.1"/>
</dbReference>
<dbReference type="Ensembl" id="ENSGALT00010045313.1">
    <property type="protein sequence ID" value="ENSGALP00010027048.1"/>
    <property type="gene ID" value="ENSGALG00010018747.1"/>
</dbReference>
<dbReference type="Ensembl" id="ENSGALT00010045315.1">
    <property type="protein sequence ID" value="ENSGALP00010027050.1"/>
    <property type="gene ID" value="ENSGALG00010018747.1"/>
</dbReference>
<dbReference type="GeneID" id="428552"/>
<dbReference type="KEGG" id="gga:428552"/>
<dbReference type="CTD" id="23767"/>
<dbReference type="VEuPathDB" id="HostDB:geneid_428552"/>
<dbReference type="eggNOG" id="ENOG502QQBZ">
    <property type="taxonomic scope" value="Eukaryota"/>
</dbReference>
<dbReference type="GeneTree" id="ENSGT00940000159704"/>
<dbReference type="HOGENOM" id="CLU_027624_0_0_1"/>
<dbReference type="InParanoid" id="F1NUK7"/>
<dbReference type="OMA" id="DAIHISW"/>
<dbReference type="OrthoDB" id="676979at2759"/>
<dbReference type="PhylomeDB" id="F1NUK7"/>
<dbReference type="TreeFam" id="TF331598"/>
<dbReference type="Reactome" id="R-GGA-5654687">
    <property type="pathway name" value="Downstream signaling of activated FGFR1"/>
</dbReference>
<dbReference type="PRO" id="PR:F1NUK7"/>
<dbReference type="Proteomes" id="UP000000539">
    <property type="component" value="Chromosome 3"/>
</dbReference>
<dbReference type="Bgee" id="ENSGALG00000008716">
    <property type="expression patterns" value="Expressed in lung and 11 other cell types or tissues"/>
</dbReference>
<dbReference type="GO" id="GO:0043679">
    <property type="term" value="C:axon terminus"/>
    <property type="evidence" value="ECO:0000250"/>
    <property type="project" value="UniProtKB"/>
</dbReference>
<dbReference type="GO" id="GO:0044295">
    <property type="term" value="C:axonal growth cone"/>
    <property type="evidence" value="ECO:0000250"/>
    <property type="project" value="UniProtKB"/>
</dbReference>
<dbReference type="GO" id="GO:0005911">
    <property type="term" value="C:cell-cell junction"/>
    <property type="evidence" value="ECO:0007669"/>
    <property type="project" value="Ensembl"/>
</dbReference>
<dbReference type="GO" id="GO:0005829">
    <property type="term" value="C:cytosol"/>
    <property type="evidence" value="ECO:0007669"/>
    <property type="project" value="Ensembl"/>
</dbReference>
<dbReference type="GO" id="GO:0005789">
    <property type="term" value="C:endoplasmic reticulum membrane"/>
    <property type="evidence" value="ECO:0007669"/>
    <property type="project" value="UniProtKB-SubCell"/>
</dbReference>
<dbReference type="GO" id="GO:0005615">
    <property type="term" value="C:extracellular space"/>
    <property type="evidence" value="ECO:0000318"/>
    <property type="project" value="GO_Central"/>
</dbReference>
<dbReference type="GO" id="GO:0005925">
    <property type="term" value="C:focal adhesion"/>
    <property type="evidence" value="ECO:0007669"/>
    <property type="project" value="UniProtKB-SubCell"/>
</dbReference>
<dbReference type="GO" id="GO:0098978">
    <property type="term" value="C:glutamatergic synapse"/>
    <property type="evidence" value="ECO:0007669"/>
    <property type="project" value="Ensembl"/>
</dbReference>
<dbReference type="GO" id="GO:0032584">
    <property type="term" value="C:growth cone membrane"/>
    <property type="evidence" value="ECO:0007669"/>
    <property type="project" value="UniProtKB-SubCell"/>
</dbReference>
<dbReference type="GO" id="GO:0005886">
    <property type="term" value="C:plasma membrane"/>
    <property type="evidence" value="ECO:0000250"/>
    <property type="project" value="UniProtKB"/>
</dbReference>
<dbReference type="GO" id="GO:0045211">
    <property type="term" value="C:postsynaptic membrane"/>
    <property type="evidence" value="ECO:0007669"/>
    <property type="project" value="Ensembl"/>
</dbReference>
<dbReference type="GO" id="GO:0097060">
    <property type="term" value="C:synaptic membrane"/>
    <property type="evidence" value="ECO:0000250"/>
    <property type="project" value="UniProtKB"/>
</dbReference>
<dbReference type="GO" id="GO:0045499">
    <property type="term" value="F:chemorepellent activity"/>
    <property type="evidence" value="ECO:0007669"/>
    <property type="project" value="Ensembl"/>
</dbReference>
<dbReference type="GO" id="GO:0005104">
    <property type="term" value="F:fibroblast growth factor receptor binding"/>
    <property type="evidence" value="ECO:0007669"/>
    <property type="project" value="Ensembl"/>
</dbReference>
<dbReference type="GO" id="GO:0042803">
    <property type="term" value="F:protein homodimerization activity"/>
    <property type="evidence" value="ECO:0007669"/>
    <property type="project" value="Ensembl"/>
</dbReference>
<dbReference type="GO" id="GO:0007411">
    <property type="term" value="P:axon guidance"/>
    <property type="evidence" value="ECO:0007669"/>
    <property type="project" value="Ensembl"/>
</dbReference>
<dbReference type="GO" id="GO:0098742">
    <property type="term" value="P:cell-cell adhesion via plasma-membrane adhesion molecules"/>
    <property type="evidence" value="ECO:0000250"/>
    <property type="project" value="UniProtKB"/>
</dbReference>
<dbReference type="GO" id="GO:0048598">
    <property type="term" value="P:embryonic morphogenesis"/>
    <property type="evidence" value="ECO:0000250"/>
    <property type="project" value="UniProtKB"/>
</dbReference>
<dbReference type="GO" id="GO:0008543">
    <property type="term" value="P:fibroblast growth factor receptor signaling pathway"/>
    <property type="evidence" value="ECO:0000250"/>
    <property type="project" value="UniProtKB"/>
</dbReference>
<dbReference type="GO" id="GO:0060322">
    <property type="term" value="P:head development"/>
    <property type="evidence" value="ECO:0000250"/>
    <property type="project" value="UniProtKB"/>
</dbReference>
<dbReference type="GO" id="GO:0007507">
    <property type="term" value="P:heart development"/>
    <property type="evidence" value="ECO:0000250"/>
    <property type="project" value="UniProtKB"/>
</dbReference>
<dbReference type="GO" id="GO:0031175">
    <property type="term" value="P:neuron projection development"/>
    <property type="evidence" value="ECO:0000250"/>
    <property type="project" value="UniProtKB"/>
</dbReference>
<dbReference type="GO" id="GO:1990138">
    <property type="term" value="P:neuron projection extension"/>
    <property type="evidence" value="ECO:0000250"/>
    <property type="project" value="UniProtKB"/>
</dbReference>
<dbReference type="GO" id="GO:0051965">
    <property type="term" value="P:positive regulation of synapse assembly"/>
    <property type="evidence" value="ECO:0007669"/>
    <property type="project" value="Ensembl"/>
</dbReference>
<dbReference type="GO" id="GO:0003345">
    <property type="term" value="P:proepicardium cell migration involved in pericardium morphogenesis"/>
    <property type="evidence" value="ECO:0000250"/>
    <property type="project" value="UniProtKB"/>
</dbReference>
<dbReference type="GO" id="GO:0048678">
    <property type="term" value="P:response to axon injury"/>
    <property type="evidence" value="ECO:0000250"/>
    <property type="project" value="UniProtKB"/>
</dbReference>
<dbReference type="GO" id="GO:0007416">
    <property type="term" value="P:synapse assembly"/>
    <property type="evidence" value="ECO:0000250"/>
    <property type="project" value="UniProtKB"/>
</dbReference>
<dbReference type="GO" id="GO:0099560">
    <property type="term" value="P:synaptic membrane adhesion"/>
    <property type="evidence" value="ECO:0007669"/>
    <property type="project" value="Ensembl"/>
</dbReference>
<dbReference type="FunFam" id="3.80.10.10:FF:000043">
    <property type="entry name" value="Leucine-rich repeat transmembrane protein FLRT3"/>
    <property type="match status" value="1"/>
</dbReference>
<dbReference type="Gene3D" id="3.80.10.10">
    <property type="entry name" value="Ribonuclease Inhibitor"/>
    <property type="match status" value="1"/>
</dbReference>
<dbReference type="InterPro" id="IPR000483">
    <property type="entry name" value="Cys-rich_flank_reg_C"/>
</dbReference>
<dbReference type="InterPro" id="IPR003961">
    <property type="entry name" value="FN3_dom"/>
</dbReference>
<dbReference type="InterPro" id="IPR001611">
    <property type="entry name" value="Leu-rich_rpt"/>
</dbReference>
<dbReference type="InterPro" id="IPR003591">
    <property type="entry name" value="Leu-rich_rpt_typical-subtyp"/>
</dbReference>
<dbReference type="InterPro" id="IPR032675">
    <property type="entry name" value="LRR_dom_sf"/>
</dbReference>
<dbReference type="InterPro" id="IPR000372">
    <property type="entry name" value="LRRNT"/>
</dbReference>
<dbReference type="InterPro" id="IPR050333">
    <property type="entry name" value="SLRP"/>
</dbReference>
<dbReference type="PANTHER" id="PTHR45712">
    <property type="entry name" value="AGAP008170-PA"/>
    <property type="match status" value="1"/>
</dbReference>
<dbReference type="PANTHER" id="PTHR45712:SF12">
    <property type="entry name" value="LEUCINE-RICH REPEAT TRANSMEMBRANE PROTEIN FLRT3"/>
    <property type="match status" value="1"/>
</dbReference>
<dbReference type="Pfam" id="PF13855">
    <property type="entry name" value="LRR_8"/>
    <property type="match status" value="2"/>
</dbReference>
<dbReference type="SMART" id="SM00369">
    <property type="entry name" value="LRR_TYP"/>
    <property type="match status" value="7"/>
</dbReference>
<dbReference type="SMART" id="SM00082">
    <property type="entry name" value="LRRCT"/>
    <property type="match status" value="1"/>
</dbReference>
<dbReference type="SMART" id="SM00013">
    <property type="entry name" value="LRRNT"/>
    <property type="match status" value="1"/>
</dbReference>
<dbReference type="SUPFAM" id="SSF52058">
    <property type="entry name" value="L domain-like"/>
    <property type="match status" value="2"/>
</dbReference>
<dbReference type="PROSITE" id="PS50853">
    <property type="entry name" value="FN3"/>
    <property type="match status" value="1"/>
</dbReference>
<dbReference type="PROSITE" id="PS51450">
    <property type="entry name" value="LRR"/>
    <property type="match status" value="8"/>
</dbReference>
<proteinExistence type="evidence at protein level"/>
<protein>
    <recommendedName>
        <fullName>Leucine-rich repeat transmembrane protein FLRT3</fullName>
    </recommendedName>
    <alternativeName>
        <fullName>Fibronectin-like domain-containing leucine-rich transmembrane protein 3</fullName>
    </alternativeName>
</protein>
<accession>F1NUK7</accession>
<organism>
    <name type="scientific">Gallus gallus</name>
    <name type="common">Chicken</name>
    <dbReference type="NCBI Taxonomy" id="9031"/>
    <lineage>
        <taxon>Eukaryota</taxon>
        <taxon>Metazoa</taxon>
        <taxon>Chordata</taxon>
        <taxon>Craniata</taxon>
        <taxon>Vertebrata</taxon>
        <taxon>Euteleostomi</taxon>
        <taxon>Archelosauria</taxon>
        <taxon>Archosauria</taxon>
        <taxon>Dinosauria</taxon>
        <taxon>Saurischia</taxon>
        <taxon>Theropoda</taxon>
        <taxon>Coelurosauria</taxon>
        <taxon>Aves</taxon>
        <taxon>Neognathae</taxon>
        <taxon>Galloanserae</taxon>
        <taxon>Galliformes</taxon>
        <taxon>Phasianidae</taxon>
        <taxon>Phasianinae</taxon>
        <taxon>Gallus</taxon>
    </lineage>
</organism>
<feature type="signal peptide" evidence="4">
    <location>
        <begin position="1"/>
        <end position="28"/>
    </location>
</feature>
<feature type="chain" id="PRO_0000434518" description="Leucine-rich repeat transmembrane protein FLRT3">
    <location>
        <begin position="29"/>
        <end position="647"/>
    </location>
</feature>
<feature type="topological domain" description="Extracellular" evidence="9">
    <location>
        <begin position="29"/>
        <end position="526"/>
    </location>
</feature>
<feature type="transmembrane region" description="Helical" evidence="4">
    <location>
        <begin position="527"/>
        <end position="547"/>
    </location>
</feature>
<feature type="topological domain" description="Cytoplasmic" evidence="9">
    <location>
        <begin position="548"/>
        <end position="647"/>
    </location>
</feature>
<feature type="domain" description="LRRNT" evidence="4">
    <location>
        <begin position="30"/>
        <end position="62"/>
    </location>
</feature>
<feature type="repeat" description="LRR 1" evidence="4">
    <location>
        <begin position="58"/>
        <end position="82"/>
    </location>
</feature>
<feature type="repeat" description="LRR 2" evidence="4">
    <location>
        <begin position="83"/>
        <end position="105"/>
    </location>
</feature>
<feature type="repeat" description="LRR 3" evidence="4">
    <location>
        <begin position="107"/>
        <end position="126"/>
    </location>
</feature>
<feature type="repeat" description="LRR 4" evidence="4">
    <location>
        <begin position="127"/>
        <end position="152"/>
    </location>
</feature>
<feature type="repeat" description="LRR 5" evidence="4">
    <location>
        <begin position="154"/>
        <end position="179"/>
    </location>
</feature>
<feature type="repeat" description="LRR 6" evidence="4">
    <location>
        <begin position="181"/>
        <end position="197"/>
    </location>
</feature>
<feature type="repeat" description="LRR 7" evidence="4">
    <location>
        <begin position="198"/>
        <end position="223"/>
    </location>
</feature>
<feature type="repeat" description="LRR 8" evidence="4">
    <location>
        <begin position="225"/>
        <end position="246"/>
    </location>
</feature>
<feature type="repeat" description="LRR 9" evidence="4">
    <location>
        <begin position="247"/>
        <end position="269"/>
    </location>
</feature>
<feature type="repeat" description="LRR 10" evidence="4">
    <location>
        <begin position="270"/>
        <end position="293"/>
    </location>
</feature>
<feature type="domain" description="LRRCT" evidence="4">
    <location>
        <begin position="305"/>
        <end position="356"/>
    </location>
</feature>
<feature type="domain" description="Fibronectin type-III" evidence="5">
    <location>
        <begin position="404"/>
        <end position="502"/>
    </location>
</feature>
<feature type="region of interest" description="Disordered" evidence="7">
    <location>
        <begin position="620"/>
        <end position="647"/>
    </location>
</feature>
<feature type="glycosylation site" description="N-linked (GlcNAc...) asparagine" evidence="6">
    <location>
        <position position="226"/>
    </location>
</feature>
<feature type="disulfide bond" evidence="3">
    <location>
        <begin position="31"/>
        <end position="37"/>
    </location>
</feature>
<feature type="disulfide bond" evidence="3">
    <location>
        <begin position="35"/>
        <end position="44"/>
    </location>
</feature>
<feature type="disulfide bond" evidence="3">
    <location>
        <begin position="309"/>
        <end position="334"/>
    </location>
</feature>
<reference key="1">
    <citation type="journal article" date="2004" name="Nature">
        <title>Sequence and comparative analysis of the chicken genome provide unique perspectives on vertebrate evolution.</title>
        <authorList>
            <person name="Hillier L.W."/>
            <person name="Miller W."/>
            <person name="Birney E."/>
            <person name="Warren W."/>
            <person name="Hardison R.C."/>
            <person name="Ponting C.P."/>
            <person name="Bork P."/>
            <person name="Burt D.W."/>
            <person name="Groenen M.A.M."/>
            <person name="Delany M.E."/>
            <person name="Dodgson J.B."/>
            <person name="Chinwalla A.T."/>
            <person name="Cliften P.F."/>
            <person name="Clifton S.W."/>
            <person name="Delehaunty K.D."/>
            <person name="Fronick C."/>
            <person name="Fulton R.S."/>
            <person name="Graves T.A."/>
            <person name="Kremitzki C."/>
            <person name="Layman D."/>
            <person name="Magrini V."/>
            <person name="McPherson J.D."/>
            <person name="Miner T.L."/>
            <person name="Minx P."/>
            <person name="Nash W.E."/>
            <person name="Nhan M.N."/>
            <person name="Nelson J.O."/>
            <person name="Oddy L.G."/>
            <person name="Pohl C.S."/>
            <person name="Randall-Maher J."/>
            <person name="Smith S.M."/>
            <person name="Wallis J.W."/>
            <person name="Yang S.-P."/>
            <person name="Romanov M.N."/>
            <person name="Rondelli C.M."/>
            <person name="Paton B."/>
            <person name="Smith J."/>
            <person name="Morrice D."/>
            <person name="Daniels L."/>
            <person name="Tempest H.G."/>
            <person name="Robertson L."/>
            <person name="Masabanda J.S."/>
            <person name="Griffin D.K."/>
            <person name="Vignal A."/>
            <person name="Fillon V."/>
            <person name="Jacobbson L."/>
            <person name="Kerje S."/>
            <person name="Andersson L."/>
            <person name="Crooijmans R.P."/>
            <person name="Aerts J."/>
            <person name="van der Poel J.J."/>
            <person name="Ellegren H."/>
            <person name="Caldwell R.B."/>
            <person name="Hubbard S.J."/>
            <person name="Grafham D.V."/>
            <person name="Kierzek A.M."/>
            <person name="McLaren S.R."/>
            <person name="Overton I.M."/>
            <person name="Arakawa H."/>
            <person name="Beattie K.J."/>
            <person name="Bezzubov Y."/>
            <person name="Boardman P.E."/>
            <person name="Bonfield J.K."/>
            <person name="Croning M.D.R."/>
            <person name="Davies R.M."/>
            <person name="Francis M.D."/>
            <person name="Humphray S.J."/>
            <person name="Scott C.E."/>
            <person name="Taylor R.G."/>
            <person name="Tickle C."/>
            <person name="Brown W.R.A."/>
            <person name="Rogers J."/>
            <person name="Buerstedde J.-M."/>
            <person name="Wilson S.A."/>
            <person name="Stubbs L."/>
            <person name="Ovcharenko I."/>
            <person name="Gordon L."/>
            <person name="Lucas S."/>
            <person name="Miller M.M."/>
            <person name="Inoko H."/>
            <person name="Shiina T."/>
            <person name="Kaufman J."/>
            <person name="Salomonsen J."/>
            <person name="Skjoedt K."/>
            <person name="Wong G.K.-S."/>
            <person name="Wang J."/>
            <person name="Liu B."/>
            <person name="Wang J."/>
            <person name="Yu J."/>
            <person name="Yang H."/>
            <person name="Nefedov M."/>
            <person name="Koriabine M."/>
            <person name="Dejong P.J."/>
            <person name="Goodstadt L."/>
            <person name="Webber C."/>
            <person name="Dickens N.J."/>
            <person name="Letunic I."/>
            <person name="Suyama M."/>
            <person name="Torrents D."/>
            <person name="von Mering C."/>
            <person name="Zdobnov E.M."/>
            <person name="Makova K."/>
            <person name="Nekrutenko A."/>
            <person name="Elnitski L."/>
            <person name="Eswara P."/>
            <person name="King D.C."/>
            <person name="Yang S.-P."/>
            <person name="Tyekucheva S."/>
            <person name="Radakrishnan A."/>
            <person name="Harris R.S."/>
            <person name="Chiaromonte F."/>
            <person name="Taylor J."/>
            <person name="He J."/>
            <person name="Rijnkels M."/>
            <person name="Griffiths-Jones S."/>
            <person name="Ureta-Vidal A."/>
            <person name="Hoffman M.M."/>
            <person name="Severin J."/>
            <person name="Searle S.M.J."/>
            <person name="Law A.S."/>
            <person name="Speed D."/>
            <person name="Waddington D."/>
            <person name="Cheng Z."/>
            <person name="Tuzun E."/>
            <person name="Eichler E."/>
            <person name="Bao Z."/>
            <person name="Flicek P."/>
            <person name="Shteynberg D.D."/>
            <person name="Brent M.R."/>
            <person name="Bye J.M."/>
            <person name="Huckle E.J."/>
            <person name="Chatterji S."/>
            <person name="Dewey C."/>
            <person name="Pachter L."/>
            <person name="Kouranov A."/>
            <person name="Mourelatos Z."/>
            <person name="Hatzigeorgiou A.G."/>
            <person name="Paterson A.H."/>
            <person name="Ivarie R."/>
            <person name="Brandstrom M."/>
            <person name="Axelsson E."/>
            <person name="Backstrom N."/>
            <person name="Berlin S."/>
            <person name="Webster M.T."/>
            <person name="Pourquie O."/>
            <person name="Reymond A."/>
            <person name="Ucla C."/>
            <person name="Antonarakis S.E."/>
            <person name="Long M."/>
            <person name="Emerson J.J."/>
            <person name="Betran E."/>
            <person name="Dupanloup I."/>
            <person name="Kaessmann H."/>
            <person name="Hinrichs A.S."/>
            <person name="Bejerano G."/>
            <person name="Furey T.S."/>
            <person name="Harte R.A."/>
            <person name="Raney B."/>
            <person name="Siepel A."/>
            <person name="Kent W.J."/>
            <person name="Haussler D."/>
            <person name="Eyras E."/>
            <person name="Castelo R."/>
            <person name="Abril J.F."/>
            <person name="Castellano S."/>
            <person name="Camara F."/>
            <person name="Parra G."/>
            <person name="Guigo R."/>
            <person name="Bourque G."/>
            <person name="Tesler G."/>
            <person name="Pevzner P.A."/>
            <person name="Smit A."/>
            <person name="Fulton L.A."/>
            <person name="Mardis E.R."/>
            <person name="Wilson R.K."/>
        </authorList>
    </citation>
    <scope>NUCLEOTIDE SEQUENCE [LARGE SCALE GENOMIC DNA]</scope>
    <source>
        <strain>Red jungle fowl</strain>
    </source>
</reference>
<reference key="2">
    <citation type="journal article" date="2011" name="Dev. Biol.">
        <title>FLRT3 as a key player on chick limb development.</title>
        <authorList>
            <person name="Tomas A.R."/>
            <person name="Certal A.C."/>
            <person name="Rodriguez-Leon J."/>
        </authorList>
    </citation>
    <scope>FUNCTION</scope>
    <scope>DEVELOPMENTAL STAGE</scope>
</reference>